<dbReference type="EC" id="1.1.1.267" evidence="1"/>
<dbReference type="EMBL" id="CP000644">
    <property type="protein sequence ID" value="ABO91148.1"/>
    <property type="molecule type" value="Genomic_DNA"/>
</dbReference>
<dbReference type="SMR" id="A4SQH6"/>
<dbReference type="STRING" id="29491.GCA_000820065_03535"/>
<dbReference type="KEGG" id="asa:ASA_3154"/>
<dbReference type="eggNOG" id="COG0743">
    <property type="taxonomic scope" value="Bacteria"/>
</dbReference>
<dbReference type="HOGENOM" id="CLU_035714_4_0_6"/>
<dbReference type="UniPathway" id="UPA00056">
    <property type="reaction ID" value="UER00092"/>
</dbReference>
<dbReference type="Proteomes" id="UP000000225">
    <property type="component" value="Chromosome"/>
</dbReference>
<dbReference type="GO" id="GO:0030604">
    <property type="term" value="F:1-deoxy-D-xylulose-5-phosphate reductoisomerase activity"/>
    <property type="evidence" value="ECO:0007669"/>
    <property type="project" value="UniProtKB-UniRule"/>
</dbReference>
<dbReference type="GO" id="GO:0030145">
    <property type="term" value="F:manganese ion binding"/>
    <property type="evidence" value="ECO:0007669"/>
    <property type="project" value="TreeGrafter"/>
</dbReference>
<dbReference type="GO" id="GO:0070402">
    <property type="term" value="F:NADPH binding"/>
    <property type="evidence" value="ECO:0007669"/>
    <property type="project" value="InterPro"/>
</dbReference>
<dbReference type="GO" id="GO:0051484">
    <property type="term" value="P:isopentenyl diphosphate biosynthetic process, methylerythritol 4-phosphate pathway involved in terpenoid biosynthetic process"/>
    <property type="evidence" value="ECO:0007669"/>
    <property type="project" value="TreeGrafter"/>
</dbReference>
<dbReference type="FunFam" id="1.10.1740.10:FF:000004">
    <property type="entry name" value="1-deoxy-D-xylulose 5-phosphate reductoisomerase"/>
    <property type="match status" value="1"/>
</dbReference>
<dbReference type="FunFam" id="3.40.50.720:FF:000045">
    <property type="entry name" value="1-deoxy-D-xylulose 5-phosphate reductoisomerase"/>
    <property type="match status" value="1"/>
</dbReference>
<dbReference type="Gene3D" id="1.10.1740.10">
    <property type="match status" value="1"/>
</dbReference>
<dbReference type="Gene3D" id="3.40.50.720">
    <property type="entry name" value="NAD(P)-binding Rossmann-like Domain"/>
    <property type="match status" value="1"/>
</dbReference>
<dbReference type="HAMAP" id="MF_00183">
    <property type="entry name" value="DXP_reductoisom"/>
    <property type="match status" value="1"/>
</dbReference>
<dbReference type="InterPro" id="IPR003821">
    <property type="entry name" value="DXP_reductoisomerase"/>
</dbReference>
<dbReference type="InterPro" id="IPR013644">
    <property type="entry name" value="DXP_reductoisomerase_C"/>
</dbReference>
<dbReference type="InterPro" id="IPR013512">
    <property type="entry name" value="DXP_reductoisomerase_N"/>
</dbReference>
<dbReference type="InterPro" id="IPR026877">
    <property type="entry name" value="DXPR_C"/>
</dbReference>
<dbReference type="InterPro" id="IPR036169">
    <property type="entry name" value="DXPR_C_sf"/>
</dbReference>
<dbReference type="InterPro" id="IPR036291">
    <property type="entry name" value="NAD(P)-bd_dom_sf"/>
</dbReference>
<dbReference type="NCBIfam" id="TIGR00243">
    <property type="entry name" value="Dxr"/>
    <property type="match status" value="1"/>
</dbReference>
<dbReference type="NCBIfam" id="NF003938">
    <property type="entry name" value="PRK05447.1-1"/>
    <property type="match status" value="1"/>
</dbReference>
<dbReference type="NCBIfam" id="NF009114">
    <property type="entry name" value="PRK12464.1"/>
    <property type="match status" value="1"/>
</dbReference>
<dbReference type="PANTHER" id="PTHR30525">
    <property type="entry name" value="1-DEOXY-D-XYLULOSE 5-PHOSPHATE REDUCTOISOMERASE"/>
    <property type="match status" value="1"/>
</dbReference>
<dbReference type="PANTHER" id="PTHR30525:SF0">
    <property type="entry name" value="1-DEOXY-D-XYLULOSE 5-PHOSPHATE REDUCTOISOMERASE, CHLOROPLASTIC"/>
    <property type="match status" value="1"/>
</dbReference>
<dbReference type="Pfam" id="PF08436">
    <property type="entry name" value="DXP_redisom_C"/>
    <property type="match status" value="1"/>
</dbReference>
<dbReference type="Pfam" id="PF02670">
    <property type="entry name" value="DXP_reductoisom"/>
    <property type="match status" value="1"/>
</dbReference>
<dbReference type="Pfam" id="PF13288">
    <property type="entry name" value="DXPR_C"/>
    <property type="match status" value="1"/>
</dbReference>
<dbReference type="PIRSF" id="PIRSF006205">
    <property type="entry name" value="Dxp_reductismrs"/>
    <property type="match status" value="1"/>
</dbReference>
<dbReference type="SUPFAM" id="SSF69055">
    <property type="entry name" value="1-deoxy-D-xylulose-5-phosphate reductoisomerase, C-terminal domain"/>
    <property type="match status" value="1"/>
</dbReference>
<dbReference type="SUPFAM" id="SSF55347">
    <property type="entry name" value="Glyceraldehyde-3-phosphate dehydrogenase-like, C-terminal domain"/>
    <property type="match status" value="1"/>
</dbReference>
<dbReference type="SUPFAM" id="SSF51735">
    <property type="entry name" value="NAD(P)-binding Rossmann-fold domains"/>
    <property type="match status" value="1"/>
</dbReference>
<keyword id="KW-0414">Isoprene biosynthesis</keyword>
<keyword id="KW-0464">Manganese</keyword>
<keyword id="KW-0479">Metal-binding</keyword>
<keyword id="KW-0521">NADP</keyword>
<keyword id="KW-0560">Oxidoreductase</keyword>
<organism>
    <name type="scientific">Aeromonas salmonicida (strain A449)</name>
    <dbReference type="NCBI Taxonomy" id="382245"/>
    <lineage>
        <taxon>Bacteria</taxon>
        <taxon>Pseudomonadati</taxon>
        <taxon>Pseudomonadota</taxon>
        <taxon>Gammaproteobacteria</taxon>
        <taxon>Aeromonadales</taxon>
        <taxon>Aeromonadaceae</taxon>
        <taxon>Aeromonas</taxon>
    </lineage>
</organism>
<accession>A4SQH6</accession>
<protein>
    <recommendedName>
        <fullName evidence="1">1-deoxy-D-xylulose 5-phosphate reductoisomerase</fullName>
        <shortName evidence="1">DXP reductoisomerase</shortName>
        <ecNumber evidence="1">1.1.1.267</ecNumber>
    </recommendedName>
    <alternativeName>
        <fullName evidence="1">1-deoxyxylulose-5-phosphate reductoisomerase</fullName>
    </alternativeName>
    <alternativeName>
        <fullName evidence="1">2-C-methyl-D-erythritol 4-phosphate synthase</fullName>
    </alternativeName>
</protein>
<name>DXR_AERS4</name>
<sequence length="397" mass="42000">MHNLVILGASGSIGQSTLKVLRRNPGRWQVLALTAARSVDAMVRDCLEFSPRFAVMVDEAAATALAGQLKTHGSATRVLSGQAALCEVAAHPDAHSVMAAIVGAAGLAPTMAAVRAGKRILLANKEALVMSGAFFMEAVREHGAELLPIDSEHNAIFQCLPEAIQRQPGYCDLAGAGISRILLTGSGGPFRYTDINALAQVTPAQAIAHPNWSMGAKISVDSATMINKGLEYIEARWLFNAAPEQIQVVIHPQSVIHSMVQYKDGSVMAQLGNPDMCTPIAHALAYPARVESGVEPLDFFSVGEFSFIRPDYERYPCLALAMSACQQGQAATTALNAANEEAVAAFLAERIGFMDIARVNEATMVALGSSPVGSLDDLIALDGAARARAHNLIEELS</sequence>
<comment type="function">
    <text evidence="1">Catalyzes the NADPH-dependent rearrangement and reduction of 1-deoxy-D-xylulose-5-phosphate (DXP) to 2-C-methyl-D-erythritol 4-phosphate (MEP).</text>
</comment>
<comment type="catalytic activity">
    <reaction evidence="1">
        <text>2-C-methyl-D-erythritol 4-phosphate + NADP(+) = 1-deoxy-D-xylulose 5-phosphate + NADPH + H(+)</text>
        <dbReference type="Rhea" id="RHEA:13717"/>
        <dbReference type="ChEBI" id="CHEBI:15378"/>
        <dbReference type="ChEBI" id="CHEBI:57783"/>
        <dbReference type="ChEBI" id="CHEBI:57792"/>
        <dbReference type="ChEBI" id="CHEBI:58262"/>
        <dbReference type="ChEBI" id="CHEBI:58349"/>
        <dbReference type="EC" id="1.1.1.267"/>
    </reaction>
    <physiologicalReaction direction="right-to-left" evidence="1">
        <dbReference type="Rhea" id="RHEA:13719"/>
    </physiologicalReaction>
</comment>
<comment type="cofactor">
    <cofactor evidence="1">
        <name>Mg(2+)</name>
        <dbReference type="ChEBI" id="CHEBI:18420"/>
    </cofactor>
    <cofactor evidence="1">
        <name>Mn(2+)</name>
        <dbReference type="ChEBI" id="CHEBI:29035"/>
    </cofactor>
</comment>
<comment type="pathway">
    <text evidence="1">Isoprenoid biosynthesis; isopentenyl diphosphate biosynthesis via DXP pathway; isopentenyl diphosphate from 1-deoxy-D-xylulose 5-phosphate: step 1/6.</text>
</comment>
<comment type="similarity">
    <text evidence="1">Belongs to the DXR family.</text>
</comment>
<evidence type="ECO:0000255" key="1">
    <source>
        <dbReference type="HAMAP-Rule" id="MF_00183"/>
    </source>
</evidence>
<reference key="1">
    <citation type="journal article" date="2008" name="BMC Genomics">
        <title>The genome of Aeromonas salmonicida subsp. salmonicida A449: insights into the evolution of a fish pathogen.</title>
        <authorList>
            <person name="Reith M.E."/>
            <person name="Singh R.K."/>
            <person name="Curtis B."/>
            <person name="Boyd J.M."/>
            <person name="Bouevitch A."/>
            <person name="Kimball J."/>
            <person name="Munholland J."/>
            <person name="Murphy C."/>
            <person name="Sarty D."/>
            <person name="Williams J."/>
            <person name="Nash J.H."/>
            <person name="Johnson S.C."/>
            <person name="Brown L.L."/>
        </authorList>
    </citation>
    <scope>NUCLEOTIDE SEQUENCE [LARGE SCALE GENOMIC DNA]</scope>
    <source>
        <strain>A449</strain>
    </source>
</reference>
<gene>
    <name evidence="1" type="primary">dxr</name>
    <name type="ordered locus">ASA_3154</name>
</gene>
<feature type="chain" id="PRO_1000020212" description="1-deoxy-D-xylulose 5-phosphate reductoisomerase">
    <location>
        <begin position="1"/>
        <end position="397"/>
    </location>
</feature>
<feature type="binding site" evidence="1">
    <location>
        <position position="10"/>
    </location>
    <ligand>
        <name>NADPH</name>
        <dbReference type="ChEBI" id="CHEBI:57783"/>
    </ligand>
</feature>
<feature type="binding site" evidence="1">
    <location>
        <position position="11"/>
    </location>
    <ligand>
        <name>NADPH</name>
        <dbReference type="ChEBI" id="CHEBI:57783"/>
    </ligand>
</feature>
<feature type="binding site" evidence="1">
    <location>
        <position position="12"/>
    </location>
    <ligand>
        <name>NADPH</name>
        <dbReference type="ChEBI" id="CHEBI:57783"/>
    </ligand>
</feature>
<feature type="binding site" evidence="1">
    <location>
        <position position="13"/>
    </location>
    <ligand>
        <name>NADPH</name>
        <dbReference type="ChEBI" id="CHEBI:57783"/>
    </ligand>
</feature>
<feature type="binding site" evidence="1">
    <location>
        <position position="36"/>
    </location>
    <ligand>
        <name>NADPH</name>
        <dbReference type="ChEBI" id="CHEBI:57783"/>
    </ligand>
</feature>
<feature type="binding site" evidence="1">
    <location>
        <position position="37"/>
    </location>
    <ligand>
        <name>NADPH</name>
        <dbReference type="ChEBI" id="CHEBI:57783"/>
    </ligand>
</feature>
<feature type="binding site" evidence="1">
    <location>
        <position position="124"/>
    </location>
    <ligand>
        <name>NADPH</name>
        <dbReference type="ChEBI" id="CHEBI:57783"/>
    </ligand>
</feature>
<feature type="binding site" evidence="1">
    <location>
        <position position="125"/>
    </location>
    <ligand>
        <name>1-deoxy-D-xylulose 5-phosphate</name>
        <dbReference type="ChEBI" id="CHEBI:57792"/>
    </ligand>
</feature>
<feature type="binding site" evidence="1">
    <location>
        <position position="126"/>
    </location>
    <ligand>
        <name>NADPH</name>
        <dbReference type="ChEBI" id="CHEBI:57783"/>
    </ligand>
</feature>
<feature type="binding site" evidence="1">
    <location>
        <position position="150"/>
    </location>
    <ligand>
        <name>Mn(2+)</name>
        <dbReference type="ChEBI" id="CHEBI:29035"/>
    </ligand>
</feature>
<feature type="binding site" evidence="1">
    <location>
        <position position="151"/>
    </location>
    <ligand>
        <name>1-deoxy-D-xylulose 5-phosphate</name>
        <dbReference type="ChEBI" id="CHEBI:57792"/>
    </ligand>
</feature>
<feature type="binding site" evidence="1">
    <location>
        <position position="152"/>
    </location>
    <ligand>
        <name>1-deoxy-D-xylulose 5-phosphate</name>
        <dbReference type="ChEBI" id="CHEBI:57792"/>
    </ligand>
</feature>
<feature type="binding site" evidence="1">
    <location>
        <position position="152"/>
    </location>
    <ligand>
        <name>Mn(2+)</name>
        <dbReference type="ChEBI" id="CHEBI:29035"/>
    </ligand>
</feature>
<feature type="binding site" evidence="1">
    <location>
        <position position="186"/>
    </location>
    <ligand>
        <name>1-deoxy-D-xylulose 5-phosphate</name>
        <dbReference type="ChEBI" id="CHEBI:57792"/>
    </ligand>
</feature>
<feature type="binding site" evidence="1">
    <location>
        <position position="209"/>
    </location>
    <ligand>
        <name>1-deoxy-D-xylulose 5-phosphate</name>
        <dbReference type="ChEBI" id="CHEBI:57792"/>
    </ligand>
</feature>
<feature type="binding site" evidence="1">
    <location>
        <position position="215"/>
    </location>
    <ligand>
        <name>NADPH</name>
        <dbReference type="ChEBI" id="CHEBI:57783"/>
    </ligand>
</feature>
<feature type="binding site" evidence="1">
    <location>
        <position position="222"/>
    </location>
    <ligand>
        <name>1-deoxy-D-xylulose 5-phosphate</name>
        <dbReference type="ChEBI" id="CHEBI:57792"/>
    </ligand>
</feature>
<feature type="binding site" evidence="1">
    <location>
        <position position="227"/>
    </location>
    <ligand>
        <name>1-deoxy-D-xylulose 5-phosphate</name>
        <dbReference type="ChEBI" id="CHEBI:57792"/>
    </ligand>
</feature>
<feature type="binding site" evidence="1">
    <location>
        <position position="228"/>
    </location>
    <ligand>
        <name>1-deoxy-D-xylulose 5-phosphate</name>
        <dbReference type="ChEBI" id="CHEBI:57792"/>
    </ligand>
</feature>
<feature type="binding site" evidence="1">
    <location>
        <position position="231"/>
    </location>
    <ligand>
        <name>1-deoxy-D-xylulose 5-phosphate</name>
        <dbReference type="ChEBI" id="CHEBI:57792"/>
    </ligand>
</feature>
<feature type="binding site" evidence="1">
    <location>
        <position position="231"/>
    </location>
    <ligand>
        <name>Mn(2+)</name>
        <dbReference type="ChEBI" id="CHEBI:29035"/>
    </ligand>
</feature>
<proteinExistence type="inferred from homology"/>